<keyword id="KW-0004">4Fe-4S</keyword>
<keyword id="KW-0150">Chloroplast</keyword>
<keyword id="KW-0408">Iron</keyword>
<keyword id="KW-0411">Iron-sulfur</keyword>
<keyword id="KW-0472">Membrane</keyword>
<keyword id="KW-0479">Metal-binding</keyword>
<keyword id="KW-0520">NAD</keyword>
<keyword id="KW-0521">NADP</keyword>
<keyword id="KW-0934">Plastid</keyword>
<keyword id="KW-0618">Plastoquinone</keyword>
<keyword id="KW-0874">Quinone</keyword>
<keyword id="KW-0677">Repeat</keyword>
<keyword id="KW-0793">Thylakoid</keyword>
<keyword id="KW-1278">Translocase</keyword>
<comment type="function">
    <text evidence="1">NDH shuttles electrons from NAD(P)H:plastoquinone, via FMN and iron-sulfur (Fe-S) centers, to quinones in the photosynthetic chain and possibly in a chloroplast respiratory chain. The immediate electron acceptor for the enzyme in this species is believed to be plastoquinone. Couples the redox reaction to proton translocation, and thus conserves the redox energy in a proton gradient.</text>
</comment>
<comment type="catalytic activity">
    <reaction evidence="1">
        <text>a plastoquinone + NADH + (n+1) H(+)(in) = a plastoquinol + NAD(+) + n H(+)(out)</text>
        <dbReference type="Rhea" id="RHEA:42608"/>
        <dbReference type="Rhea" id="RHEA-COMP:9561"/>
        <dbReference type="Rhea" id="RHEA-COMP:9562"/>
        <dbReference type="ChEBI" id="CHEBI:15378"/>
        <dbReference type="ChEBI" id="CHEBI:17757"/>
        <dbReference type="ChEBI" id="CHEBI:57540"/>
        <dbReference type="ChEBI" id="CHEBI:57945"/>
        <dbReference type="ChEBI" id="CHEBI:62192"/>
    </reaction>
</comment>
<comment type="catalytic activity">
    <reaction evidence="1">
        <text>a plastoquinone + NADPH + (n+1) H(+)(in) = a plastoquinol + NADP(+) + n H(+)(out)</text>
        <dbReference type="Rhea" id="RHEA:42612"/>
        <dbReference type="Rhea" id="RHEA-COMP:9561"/>
        <dbReference type="Rhea" id="RHEA-COMP:9562"/>
        <dbReference type="ChEBI" id="CHEBI:15378"/>
        <dbReference type="ChEBI" id="CHEBI:17757"/>
        <dbReference type="ChEBI" id="CHEBI:57783"/>
        <dbReference type="ChEBI" id="CHEBI:58349"/>
        <dbReference type="ChEBI" id="CHEBI:62192"/>
    </reaction>
</comment>
<comment type="cofactor">
    <cofactor evidence="1">
        <name>[4Fe-4S] cluster</name>
        <dbReference type="ChEBI" id="CHEBI:49883"/>
    </cofactor>
    <text evidence="1">Binds 2 [4Fe-4S] clusters per subunit.</text>
</comment>
<comment type="subunit">
    <text evidence="1">NDH is composed of at least 16 different subunits, 5 of which are encoded in the nucleus.</text>
</comment>
<comment type="subcellular location">
    <subcellularLocation>
        <location evidence="1">Plastid</location>
        <location evidence="1">Chloroplast thylakoid membrane</location>
        <topology evidence="1">Peripheral membrane protein</topology>
    </subcellularLocation>
</comment>
<comment type="similarity">
    <text evidence="1">Belongs to the complex I 23 kDa subunit family.</text>
</comment>
<accession>Q8HVU5</accession>
<evidence type="ECO:0000255" key="1">
    <source>
        <dbReference type="HAMAP-Rule" id="MF_01351"/>
    </source>
</evidence>
<proteinExistence type="inferred from homology"/>
<geneLocation type="chloroplast"/>
<sequence>MFPMVTEFMNYGQQTIRAARYIGQGFMITLSHANRLPVTIQYPYEKLITSERFRGRIHFEFDKCIACEVCVRVCPIDLPVVDWKLETDIRKKRLLNYSIDFGICIFCGNCVEYCPTNCLSMTEEYELSTYDRHELNYNQIALGRLPMSIIDDYTIRTILNLPEIKT</sequence>
<reference key="1">
    <citation type="submission" date="2003-01" db="EMBL/GenBank/DDBJ databases">
        <title>Chloroplast DNA phylogeny of tribe Heliantheae (Asteraceae).</title>
        <authorList>
            <person name="Panero J.L."/>
            <person name="Baldwin B.G."/>
            <person name="Schilling E.E."/>
            <person name="Clevinger J.A."/>
        </authorList>
    </citation>
    <scope>NUCLEOTIDE SEQUENCE [GENOMIC DNA]</scope>
</reference>
<protein>
    <recommendedName>
        <fullName evidence="1">NAD(P)H-quinone oxidoreductase subunit I, chloroplastic</fullName>
        <ecNumber evidence="1">7.1.1.-</ecNumber>
    </recommendedName>
    <alternativeName>
        <fullName evidence="1">NAD(P)H dehydrogenase subunit I</fullName>
        <shortName evidence="1">NDH subunit I</shortName>
    </alternativeName>
    <alternativeName>
        <fullName evidence="1">NADH-plastoquinone oxidoreductase subunit I</fullName>
    </alternativeName>
</protein>
<feature type="chain" id="PRO_0000250768" description="NAD(P)H-quinone oxidoreductase subunit I, chloroplastic">
    <location>
        <begin position="1"/>
        <end position="166"/>
    </location>
</feature>
<feature type="domain" description="4Fe-4S ferredoxin-type 1" evidence="1">
    <location>
        <begin position="55"/>
        <end position="84"/>
    </location>
</feature>
<feature type="domain" description="4Fe-4S ferredoxin-type 2" evidence="1">
    <location>
        <begin position="95"/>
        <end position="124"/>
    </location>
</feature>
<feature type="binding site" evidence="1">
    <location>
        <position position="64"/>
    </location>
    <ligand>
        <name>[4Fe-4S] cluster</name>
        <dbReference type="ChEBI" id="CHEBI:49883"/>
        <label>1</label>
    </ligand>
</feature>
<feature type="binding site" evidence="1">
    <location>
        <position position="67"/>
    </location>
    <ligand>
        <name>[4Fe-4S] cluster</name>
        <dbReference type="ChEBI" id="CHEBI:49883"/>
        <label>1</label>
    </ligand>
</feature>
<feature type="binding site" evidence="1">
    <location>
        <position position="70"/>
    </location>
    <ligand>
        <name>[4Fe-4S] cluster</name>
        <dbReference type="ChEBI" id="CHEBI:49883"/>
        <label>1</label>
    </ligand>
</feature>
<feature type="binding site" evidence="1">
    <location>
        <position position="74"/>
    </location>
    <ligand>
        <name>[4Fe-4S] cluster</name>
        <dbReference type="ChEBI" id="CHEBI:49883"/>
        <label>2</label>
    </ligand>
</feature>
<feature type="binding site" evidence="1">
    <location>
        <position position="104"/>
    </location>
    <ligand>
        <name>[4Fe-4S] cluster</name>
        <dbReference type="ChEBI" id="CHEBI:49883"/>
        <label>2</label>
    </ligand>
</feature>
<feature type="binding site" evidence="1">
    <location>
        <position position="107"/>
    </location>
    <ligand>
        <name>[4Fe-4S] cluster</name>
        <dbReference type="ChEBI" id="CHEBI:49883"/>
        <label>2</label>
    </ligand>
</feature>
<feature type="binding site" evidence="1">
    <location>
        <position position="110"/>
    </location>
    <ligand>
        <name>[4Fe-4S] cluster</name>
        <dbReference type="ChEBI" id="CHEBI:49883"/>
        <label>2</label>
    </ligand>
</feature>
<feature type="binding site" evidence="1">
    <location>
        <position position="114"/>
    </location>
    <ligand>
        <name>[4Fe-4S] cluster</name>
        <dbReference type="ChEBI" id="CHEBI:49883"/>
        <label>1</label>
    </ligand>
</feature>
<name>NDHI_CLIAL</name>
<organism>
    <name type="scientific">Clibadium alatum</name>
    <name type="common">Clibadium laxum</name>
    <dbReference type="NCBI Taxonomy" id="183011"/>
    <lineage>
        <taxon>Eukaryota</taxon>
        <taxon>Viridiplantae</taxon>
        <taxon>Streptophyta</taxon>
        <taxon>Embryophyta</taxon>
        <taxon>Tracheophyta</taxon>
        <taxon>Spermatophyta</taxon>
        <taxon>Magnoliopsida</taxon>
        <taxon>eudicotyledons</taxon>
        <taxon>Gunneridae</taxon>
        <taxon>Pentapetalae</taxon>
        <taxon>asterids</taxon>
        <taxon>campanulids</taxon>
        <taxon>Asterales</taxon>
        <taxon>Asteraceae</taxon>
        <taxon>Asteroideae</taxon>
        <taxon>Heliantheae alliance</taxon>
        <taxon>Heliantheae</taxon>
        <taxon>Clibadium</taxon>
    </lineage>
</organism>
<dbReference type="EC" id="7.1.1.-" evidence="1"/>
<dbReference type="EMBL" id="AF383767">
    <property type="protein sequence ID" value="AAN61709.1"/>
    <property type="molecule type" value="Genomic_DNA"/>
</dbReference>
<dbReference type="SMR" id="Q8HVU5"/>
<dbReference type="GO" id="GO:0009535">
    <property type="term" value="C:chloroplast thylakoid membrane"/>
    <property type="evidence" value="ECO:0007669"/>
    <property type="project" value="UniProtKB-SubCell"/>
</dbReference>
<dbReference type="GO" id="GO:0051539">
    <property type="term" value="F:4 iron, 4 sulfur cluster binding"/>
    <property type="evidence" value="ECO:0007669"/>
    <property type="project" value="UniProtKB-KW"/>
</dbReference>
<dbReference type="GO" id="GO:0005506">
    <property type="term" value="F:iron ion binding"/>
    <property type="evidence" value="ECO:0007669"/>
    <property type="project" value="UniProtKB-UniRule"/>
</dbReference>
<dbReference type="GO" id="GO:0008137">
    <property type="term" value="F:NADH dehydrogenase (ubiquinone) activity"/>
    <property type="evidence" value="ECO:0007669"/>
    <property type="project" value="InterPro"/>
</dbReference>
<dbReference type="GO" id="GO:0048038">
    <property type="term" value="F:quinone binding"/>
    <property type="evidence" value="ECO:0007669"/>
    <property type="project" value="UniProtKB-KW"/>
</dbReference>
<dbReference type="GO" id="GO:0019684">
    <property type="term" value="P:photosynthesis, light reaction"/>
    <property type="evidence" value="ECO:0007669"/>
    <property type="project" value="UniProtKB-UniRule"/>
</dbReference>
<dbReference type="FunFam" id="3.30.70.3270:FF:000006">
    <property type="entry name" value="NAD(P)H-quinone oxidoreductase subunit I, chloroplastic"/>
    <property type="match status" value="1"/>
</dbReference>
<dbReference type="Gene3D" id="3.30.70.3270">
    <property type="match status" value="1"/>
</dbReference>
<dbReference type="HAMAP" id="MF_01351">
    <property type="entry name" value="NDH1_NuoI"/>
    <property type="match status" value="1"/>
</dbReference>
<dbReference type="InterPro" id="IPR017896">
    <property type="entry name" value="4Fe4S_Fe-S-bd"/>
</dbReference>
<dbReference type="InterPro" id="IPR017900">
    <property type="entry name" value="4Fe4S_Fe_S_CS"/>
</dbReference>
<dbReference type="InterPro" id="IPR010226">
    <property type="entry name" value="NADH_quinone_OxRdtase_chainI"/>
</dbReference>
<dbReference type="InterPro" id="IPR004497">
    <property type="entry name" value="NDHI"/>
</dbReference>
<dbReference type="NCBIfam" id="TIGR00403">
    <property type="entry name" value="ndhI"/>
    <property type="match status" value="1"/>
</dbReference>
<dbReference type="NCBIfam" id="TIGR01971">
    <property type="entry name" value="NuoI"/>
    <property type="match status" value="1"/>
</dbReference>
<dbReference type="NCBIfam" id="NF004537">
    <property type="entry name" value="PRK05888.1-3"/>
    <property type="match status" value="1"/>
</dbReference>
<dbReference type="PANTHER" id="PTHR47275">
    <property type="entry name" value="NAD(P)H-QUINONE OXIDOREDUCTASE SUBUNIT I, CHLOROPLASTIC"/>
    <property type="match status" value="1"/>
</dbReference>
<dbReference type="PANTHER" id="PTHR47275:SF1">
    <property type="entry name" value="NAD(P)H-QUINONE OXIDOREDUCTASE SUBUNIT I, CHLOROPLASTIC"/>
    <property type="match status" value="1"/>
</dbReference>
<dbReference type="Pfam" id="PF00037">
    <property type="entry name" value="Fer4"/>
    <property type="match status" value="2"/>
</dbReference>
<dbReference type="SUPFAM" id="SSF54862">
    <property type="entry name" value="4Fe-4S ferredoxins"/>
    <property type="match status" value="1"/>
</dbReference>
<dbReference type="PROSITE" id="PS00198">
    <property type="entry name" value="4FE4S_FER_1"/>
    <property type="match status" value="2"/>
</dbReference>
<dbReference type="PROSITE" id="PS51379">
    <property type="entry name" value="4FE4S_FER_2"/>
    <property type="match status" value="2"/>
</dbReference>
<gene>
    <name evidence="1" type="primary">ndhI</name>
</gene>